<protein>
    <recommendedName>
        <fullName evidence="1">Phosphoheptose isomerase</fullName>
        <ecNumber evidence="1">5.3.1.28</ecNumber>
    </recommendedName>
    <alternativeName>
        <fullName evidence="1">Sedoheptulose 7-phosphate isomerase</fullName>
    </alternativeName>
</protein>
<accession>C1D5I3</accession>
<keyword id="KW-0119">Carbohydrate metabolism</keyword>
<keyword id="KW-0963">Cytoplasm</keyword>
<keyword id="KW-0413">Isomerase</keyword>
<keyword id="KW-0479">Metal-binding</keyword>
<keyword id="KW-1185">Reference proteome</keyword>
<keyword id="KW-0862">Zinc</keyword>
<comment type="function">
    <text evidence="1">Catalyzes the isomerization of sedoheptulose 7-phosphate in D-glycero-D-manno-heptose 7-phosphate.</text>
</comment>
<comment type="catalytic activity">
    <reaction evidence="1">
        <text>2 D-sedoheptulose 7-phosphate = D-glycero-alpha-D-manno-heptose 7-phosphate + D-glycero-beta-D-manno-heptose 7-phosphate</text>
        <dbReference type="Rhea" id="RHEA:27489"/>
        <dbReference type="ChEBI" id="CHEBI:57483"/>
        <dbReference type="ChEBI" id="CHEBI:60203"/>
        <dbReference type="ChEBI" id="CHEBI:60204"/>
        <dbReference type="EC" id="5.3.1.28"/>
    </reaction>
</comment>
<comment type="cofactor">
    <cofactor evidence="1">
        <name>Zn(2+)</name>
        <dbReference type="ChEBI" id="CHEBI:29105"/>
    </cofactor>
    <text evidence="1">Binds 1 zinc ion per subunit.</text>
</comment>
<comment type="pathway">
    <text evidence="1">Carbohydrate biosynthesis; D-glycero-D-manno-heptose 7-phosphate biosynthesis; D-glycero-alpha-D-manno-heptose 7-phosphate and D-glycero-beta-D-manno-heptose 7-phosphate from sedoheptulose 7-phosphate: step 1/1.</text>
</comment>
<comment type="subunit">
    <text evidence="1">Homotetramer.</text>
</comment>
<comment type="subcellular location">
    <subcellularLocation>
        <location evidence="1">Cytoplasm</location>
    </subcellularLocation>
</comment>
<comment type="miscellaneous">
    <text evidence="1">The reaction produces a racemic mixture of D-glycero-alpha-D-manno-heptose 7-phosphate and D-glycero-beta-D-manno-heptose 7-phosphate.</text>
</comment>
<comment type="similarity">
    <text evidence="1">Belongs to the SIS family. GmhA subfamily.</text>
</comment>
<evidence type="ECO:0000255" key="1">
    <source>
        <dbReference type="HAMAP-Rule" id="MF_00067"/>
    </source>
</evidence>
<gene>
    <name evidence="1" type="primary">gmhA</name>
    <name type="ordered locus">LHK_03022</name>
</gene>
<organism>
    <name type="scientific">Laribacter hongkongensis (strain HLHK9)</name>
    <dbReference type="NCBI Taxonomy" id="557598"/>
    <lineage>
        <taxon>Bacteria</taxon>
        <taxon>Pseudomonadati</taxon>
        <taxon>Pseudomonadota</taxon>
        <taxon>Betaproteobacteria</taxon>
        <taxon>Neisseriales</taxon>
        <taxon>Aquaspirillaceae</taxon>
        <taxon>Laribacter</taxon>
    </lineage>
</organism>
<dbReference type="EC" id="5.3.1.28" evidence="1"/>
<dbReference type="EMBL" id="CP001154">
    <property type="protein sequence ID" value="ACO76000.1"/>
    <property type="molecule type" value="Genomic_DNA"/>
</dbReference>
<dbReference type="RefSeq" id="WP_012698463.1">
    <property type="nucleotide sequence ID" value="NC_012559.1"/>
</dbReference>
<dbReference type="SMR" id="C1D5I3"/>
<dbReference type="STRING" id="557598.LHK_03022"/>
<dbReference type="KEGG" id="lhk:LHK_03022"/>
<dbReference type="eggNOG" id="COG0279">
    <property type="taxonomic scope" value="Bacteria"/>
</dbReference>
<dbReference type="HOGENOM" id="CLU_080999_4_0_4"/>
<dbReference type="UniPathway" id="UPA00041">
    <property type="reaction ID" value="UER00436"/>
</dbReference>
<dbReference type="Proteomes" id="UP000002010">
    <property type="component" value="Chromosome"/>
</dbReference>
<dbReference type="GO" id="GO:0005737">
    <property type="term" value="C:cytoplasm"/>
    <property type="evidence" value="ECO:0007669"/>
    <property type="project" value="UniProtKB-SubCell"/>
</dbReference>
<dbReference type="GO" id="GO:0097367">
    <property type="term" value="F:carbohydrate derivative binding"/>
    <property type="evidence" value="ECO:0007669"/>
    <property type="project" value="InterPro"/>
</dbReference>
<dbReference type="GO" id="GO:0008968">
    <property type="term" value="F:D-sedoheptulose 7-phosphate isomerase activity"/>
    <property type="evidence" value="ECO:0007669"/>
    <property type="project" value="UniProtKB-UniRule"/>
</dbReference>
<dbReference type="GO" id="GO:0008270">
    <property type="term" value="F:zinc ion binding"/>
    <property type="evidence" value="ECO:0007669"/>
    <property type="project" value="UniProtKB-UniRule"/>
</dbReference>
<dbReference type="GO" id="GO:0005975">
    <property type="term" value="P:carbohydrate metabolic process"/>
    <property type="evidence" value="ECO:0007669"/>
    <property type="project" value="UniProtKB-UniRule"/>
</dbReference>
<dbReference type="GO" id="GO:2001061">
    <property type="term" value="P:D-glycero-D-manno-heptose 7-phosphate biosynthetic process"/>
    <property type="evidence" value="ECO:0007669"/>
    <property type="project" value="UniProtKB-UniPathway"/>
</dbReference>
<dbReference type="CDD" id="cd05006">
    <property type="entry name" value="SIS_GmhA"/>
    <property type="match status" value="1"/>
</dbReference>
<dbReference type="Gene3D" id="3.40.50.10490">
    <property type="entry name" value="Glucose-6-phosphate isomerase like protein, domain 1"/>
    <property type="match status" value="1"/>
</dbReference>
<dbReference type="HAMAP" id="MF_00067">
    <property type="entry name" value="GmhA"/>
    <property type="match status" value="1"/>
</dbReference>
<dbReference type="InterPro" id="IPR035461">
    <property type="entry name" value="GmhA/DiaA"/>
</dbReference>
<dbReference type="InterPro" id="IPR004515">
    <property type="entry name" value="Phosphoheptose_Isoase"/>
</dbReference>
<dbReference type="InterPro" id="IPR001347">
    <property type="entry name" value="SIS_dom"/>
</dbReference>
<dbReference type="InterPro" id="IPR046348">
    <property type="entry name" value="SIS_dom_sf"/>
</dbReference>
<dbReference type="InterPro" id="IPR050099">
    <property type="entry name" value="SIS_GmhA/DiaA_subfam"/>
</dbReference>
<dbReference type="NCBIfam" id="NF010546">
    <property type="entry name" value="PRK13936.1"/>
    <property type="match status" value="1"/>
</dbReference>
<dbReference type="PANTHER" id="PTHR30390:SF6">
    <property type="entry name" value="DNAA INITIATOR-ASSOCIATING PROTEIN DIAA"/>
    <property type="match status" value="1"/>
</dbReference>
<dbReference type="PANTHER" id="PTHR30390">
    <property type="entry name" value="SEDOHEPTULOSE 7-PHOSPHATE ISOMERASE / DNAA INITIATOR-ASSOCIATING FACTOR FOR REPLICATION INITIATION"/>
    <property type="match status" value="1"/>
</dbReference>
<dbReference type="Pfam" id="PF13580">
    <property type="entry name" value="SIS_2"/>
    <property type="match status" value="1"/>
</dbReference>
<dbReference type="SUPFAM" id="SSF53697">
    <property type="entry name" value="SIS domain"/>
    <property type="match status" value="1"/>
</dbReference>
<dbReference type="PROSITE" id="PS51464">
    <property type="entry name" value="SIS"/>
    <property type="match status" value="1"/>
</dbReference>
<reference key="1">
    <citation type="journal article" date="2009" name="PLoS Genet.">
        <title>The complete genome and proteome of Laribacter hongkongensis reveal potential mechanisms for adaptations to different temperatures and habitats.</title>
        <authorList>
            <person name="Woo P.C.Y."/>
            <person name="Lau S.K.P."/>
            <person name="Tse H."/>
            <person name="Teng J.L.L."/>
            <person name="Curreem S.O."/>
            <person name="Tsang A.K.L."/>
            <person name="Fan R.Y.Y."/>
            <person name="Wong G.K.M."/>
            <person name="Huang Y."/>
            <person name="Loman N.J."/>
            <person name="Snyder L.A.S."/>
            <person name="Cai J.J."/>
            <person name="Huang J.-D."/>
            <person name="Mak W."/>
            <person name="Pallen M.J."/>
            <person name="Lok S."/>
            <person name="Yuen K.-Y."/>
        </authorList>
    </citation>
    <scope>NUCLEOTIDE SEQUENCE [LARGE SCALE GENOMIC DNA]</scope>
    <source>
        <strain>HLHK9</strain>
    </source>
</reference>
<feature type="chain" id="PRO_1000197008" description="Phosphoheptose isomerase">
    <location>
        <begin position="1"/>
        <end position="196"/>
    </location>
</feature>
<feature type="domain" description="SIS" evidence="1">
    <location>
        <begin position="36"/>
        <end position="196"/>
    </location>
</feature>
<feature type="binding site" evidence="1">
    <location>
        <begin position="51"/>
        <end position="53"/>
    </location>
    <ligand>
        <name>substrate</name>
    </ligand>
</feature>
<feature type="binding site" evidence="1">
    <location>
        <position position="60"/>
    </location>
    <ligand>
        <name>Zn(2+)</name>
        <dbReference type="ChEBI" id="CHEBI:29105"/>
    </ligand>
</feature>
<feature type="binding site" evidence="1">
    <location>
        <position position="64"/>
    </location>
    <ligand>
        <name>substrate</name>
    </ligand>
</feature>
<feature type="binding site" evidence="1">
    <location>
        <position position="64"/>
    </location>
    <ligand>
        <name>Zn(2+)</name>
        <dbReference type="ChEBI" id="CHEBI:29105"/>
    </ligand>
</feature>
<feature type="binding site" evidence="1">
    <location>
        <begin position="93"/>
        <end position="94"/>
    </location>
    <ligand>
        <name>substrate</name>
    </ligand>
</feature>
<feature type="binding site" evidence="1">
    <location>
        <begin position="119"/>
        <end position="121"/>
    </location>
    <ligand>
        <name>substrate</name>
    </ligand>
</feature>
<feature type="binding site" evidence="1">
    <location>
        <position position="124"/>
    </location>
    <ligand>
        <name>substrate</name>
    </ligand>
</feature>
<feature type="binding site" evidence="1">
    <location>
        <position position="174"/>
    </location>
    <ligand>
        <name>substrate</name>
    </ligand>
</feature>
<feature type="binding site" evidence="1">
    <location>
        <position position="174"/>
    </location>
    <ligand>
        <name>Zn(2+)</name>
        <dbReference type="ChEBI" id="CHEBI:29105"/>
    </ligand>
</feature>
<feature type="binding site" evidence="1">
    <location>
        <position position="182"/>
    </location>
    <ligand>
        <name>Zn(2+)</name>
        <dbReference type="ChEBI" id="CHEBI:29105"/>
    </ligand>
</feature>
<proteinExistence type="inferred from homology"/>
<name>GMHA_LARHH</name>
<sequence>MELIERVNGHFLESMAAKQLAMEVLPGTIAQAAESMVACLMNEGKILACGNGGSAADAQHFAAEMVGRFEKERPGLAALSLATDTSALTAIGNDYDFERVFSKQVRALGQDGDLLLALSTSGNSLNVIEAIHAAHERQMGVIALTGRDGGQIADLMTADDILINVPVERTARIQEVHITIIHALCDAVDYMLLGGD</sequence>